<comment type="function">
    <text evidence="1">Catalyzes the phosphorylation of D-fructose 6-phosphate, the first committing step of glycolysis. Uses inorganic phosphate (PPi) as phosphoryl donor instead of ATP like common ATP-dependent phosphofructokinases (ATP-PFKs), which renders the reaction reversible, and can thus function both in glycolysis and gluconeogenesis. Consistently, PPi-PFK can replace the enzymes of both the forward (ATP-PFK) and reverse (fructose-bisphosphatase (FBPase)) reactions.</text>
</comment>
<comment type="catalytic activity">
    <reaction evidence="1">
        <text>beta-D-fructose 6-phosphate + diphosphate = beta-D-fructose 1,6-bisphosphate + phosphate + H(+)</text>
        <dbReference type="Rhea" id="RHEA:13613"/>
        <dbReference type="ChEBI" id="CHEBI:15378"/>
        <dbReference type="ChEBI" id="CHEBI:32966"/>
        <dbReference type="ChEBI" id="CHEBI:33019"/>
        <dbReference type="ChEBI" id="CHEBI:43474"/>
        <dbReference type="ChEBI" id="CHEBI:57634"/>
        <dbReference type="EC" id="2.7.1.90"/>
    </reaction>
</comment>
<comment type="cofactor">
    <cofactor evidence="1">
        <name>Mg(2+)</name>
        <dbReference type="ChEBI" id="CHEBI:18420"/>
    </cofactor>
</comment>
<comment type="activity regulation">
    <text evidence="1">Non-allosteric.</text>
</comment>
<comment type="pathway">
    <text evidence="1">Carbohydrate degradation; glycolysis; D-glyceraldehyde 3-phosphate and glycerone phosphate from D-glucose: step 3/4.</text>
</comment>
<comment type="subunit">
    <text evidence="1">Homodimer or homotetramer.</text>
</comment>
<comment type="subcellular location">
    <subcellularLocation>
        <location evidence="1">Cytoplasm</location>
    </subcellularLocation>
</comment>
<comment type="disruption phenotype">
    <text evidence="2">No effect.</text>
</comment>
<comment type="similarity">
    <text evidence="1">Belongs to the phosphofructokinase type A (PFKA) family. Mixed-substrate PFK group III subfamily.</text>
</comment>
<comment type="caution">
    <text evidence="3 4">Was originally characterized as ATP-dependent phosphofructokinase (PubMed:9055413). However, inspection of the original N-terminal sequence showed that the characterized enzyme was not pfkA1 (SCO2119), but pfkA2 (SCO5426) instead, another isozyme in S.coelicolor (PubMed:18606812).</text>
</comment>
<sequence>MKVGVLTGGGDCPGLNAVIRAVVRKGVQEYGYDFTGFRDGWRGPLEGDTVPLDIPAVRGILPRGGTVLGSSRTNPLKQRDGIRRIKDNLAALGVEALITIGGEDTLGVATRLADEYGVPCVGVPKTIDNDLSATDYTFGFDTAVGIATEAIDRLHTTAESHMRVLVVEVMGRHAGWIALHSGLAGGANVILIPEQRFDVEQVCSWVTSRFRASYAPIVVVAEGAMPRDGDMVLKDESLDSYGHVRLSGVGEWLAKQIEKRTGNEARTTVLGHVQRGGTPSAFDRWLATRFGLHAVDCVHDGDFGKMVALRGTDIVRVPIAEATARLKTVDPALYEEVGVFFG</sequence>
<accession>O08333</accession>
<keyword id="KW-0963">Cytoplasm</keyword>
<keyword id="KW-0324">Glycolysis</keyword>
<keyword id="KW-0418">Kinase</keyword>
<keyword id="KW-0460">Magnesium</keyword>
<keyword id="KW-0479">Metal-binding</keyword>
<keyword id="KW-1185">Reference proteome</keyword>
<keyword id="KW-0808">Transferase</keyword>
<name>PFP_STRCO</name>
<proteinExistence type="inferred from homology"/>
<feature type="chain" id="PRO_0000111986" description="Pyrophosphate--fructose 6-phosphate 1-phosphotransferase">
    <location>
        <begin position="1"/>
        <end position="342"/>
    </location>
</feature>
<feature type="active site" description="Proton acceptor" evidence="1">
    <location>
        <position position="128"/>
    </location>
</feature>
<feature type="binding site" evidence="1">
    <location>
        <position position="10"/>
    </location>
    <ligand>
        <name>diphosphate</name>
        <dbReference type="ChEBI" id="CHEBI:33019"/>
    </ligand>
</feature>
<feature type="binding site" evidence="1">
    <location>
        <position position="103"/>
    </location>
    <ligand>
        <name>Mg(2+)</name>
        <dbReference type="ChEBI" id="CHEBI:18420"/>
        <note>catalytic</note>
    </ligand>
</feature>
<feature type="binding site" description="in other chain" evidence="1">
    <location>
        <begin position="126"/>
        <end position="128"/>
    </location>
    <ligand>
        <name>substrate</name>
        <note>ligand shared between dimeric partners</note>
    </ligand>
</feature>
<feature type="binding site" evidence="1">
    <location>
        <position position="163"/>
    </location>
    <ligand>
        <name>substrate</name>
        <note>ligand shared between dimeric partners</note>
    </ligand>
</feature>
<feature type="binding site" description="in other chain" evidence="1">
    <location>
        <begin position="170"/>
        <end position="172"/>
    </location>
    <ligand>
        <name>substrate</name>
        <note>ligand shared between dimeric partners</note>
    </ligand>
</feature>
<feature type="binding site" description="in other chain" evidence="1">
    <location>
        <position position="222"/>
    </location>
    <ligand>
        <name>substrate</name>
        <note>ligand shared between dimeric partners</note>
    </ligand>
</feature>
<feature type="binding site" evidence="1">
    <location>
        <position position="266"/>
    </location>
    <ligand>
        <name>substrate</name>
        <note>ligand shared between dimeric partners</note>
    </ligand>
</feature>
<feature type="binding site" description="in other chain" evidence="1">
    <location>
        <begin position="272"/>
        <end position="275"/>
    </location>
    <ligand>
        <name>substrate</name>
        <note>ligand shared between dimeric partners</note>
    </ligand>
</feature>
<feature type="site" description="Important for catalytic activity and substrate specificity; stabilizes the transition state when the phosphoryl donor is PPi; prevents ATP from binding by mimicking the alpha-phosphate group of ATP" evidence="1">
    <location>
        <position position="104"/>
    </location>
</feature>
<feature type="site" description="Important for catalytic activity; stabilizes the transition state when the phosphoryl donor is PPi" evidence="1">
    <location>
        <position position="125"/>
    </location>
</feature>
<reference key="1">
    <citation type="journal article" date="1997" name="Appl. Environ. Microbiol.">
        <title>Identification of ATP-dependent phosphofructokinase as a regulatory step in the glycolytic pathway of the actinomycete Streptomyces coelicolor A3(2).</title>
        <authorList>
            <person name="Alves A.M.C.R."/>
            <person name="Euverink G.J.W."/>
            <person name="Bibb M.J."/>
            <person name="Dijkhuizen L."/>
        </authorList>
    </citation>
    <scope>NUCLEOTIDE SEQUENCE [GENOMIC DNA]</scope>
    <source>
        <strain>A3(2) / 1109</strain>
    </source>
</reference>
<reference key="2">
    <citation type="journal article" date="2002" name="Nature">
        <title>Complete genome sequence of the model actinomycete Streptomyces coelicolor A3(2).</title>
        <authorList>
            <person name="Bentley S.D."/>
            <person name="Chater K.F."/>
            <person name="Cerdeno-Tarraga A.-M."/>
            <person name="Challis G.L."/>
            <person name="Thomson N.R."/>
            <person name="James K.D."/>
            <person name="Harris D.E."/>
            <person name="Quail M.A."/>
            <person name="Kieser H."/>
            <person name="Harper D."/>
            <person name="Bateman A."/>
            <person name="Brown S."/>
            <person name="Chandra G."/>
            <person name="Chen C.W."/>
            <person name="Collins M."/>
            <person name="Cronin A."/>
            <person name="Fraser A."/>
            <person name="Goble A."/>
            <person name="Hidalgo J."/>
            <person name="Hornsby T."/>
            <person name="Howarth S."/>
            <person name="Huang C.-H."/>
            <person name="Kieser T."/>
            <person name="Larke L."/>
            <person name="Murphy L.D."/>
            <person name="Oliver K."/>
            <person name="O'Neil S."/>
            <person name="Rabbinowitsch E."/>
            <person name="Rajandream M.A."/>
            <person name="Rutherford K.M."/>
            <person name="Rutter S."/>
            <person name="Seeger K."/>
            <person name="Saunders D."/>
            <person name="Sharp S."/>
            <person name="Squares R."/>
            <person name="Squares S."/>
            <person name="Taylor K."/>
            <person name="Warren T."/>
            <person name="Wietzorrek A."/>
            <person name="Woodward J.R."/>
            <person name="Barrell B.G."/>
            <person name="Parkhill J."/>
            <person name="Hopwood D.A."/>
        </authorList>
    </citation>
    <scope>NUCLEOTIDE SEQUENCE [LARGE SCALE GENOMIC DNA]</scope>
    <source>
        <strain>ATCC BAA-471 / A3(2) / M145</strain>
    </source>
</reference>
<reference key="3">
    <citation type="journal article" date="2008" name="J. Biol. Chem.">
        <title>Antibiotic overproduction in Streptomyces coelicolor A3(2) mediated by phosphofructokinase deletion.</title>
        <authorList>
            <person name="Borodina I."/>
            <person name="Siebring J."/>
            <person name="Zhang J."/>
            <person name="Smith C.P."/>
            <person name="van Keulen G."/>
            <person name="Dijkhuizen L."/>
            <person name="Nielsen J."/>
        </authorList>
    </citation>
    <scope>DISRUPTION PHENOTYPE</scope>
</reference>
<dbReference type="EC" id="2.7.1.90" evidence="1"/>
<dbReference type="EMBL" id="U51728">
    <property type="protein sequence ID" value="AAC45135.1"/>
    <property type="molecule type" value="Genomic_DNA"/>
</dbReference>
<dbReference type="EMBL" id="AL939111">
    <property type="protein sequence ID" value="CAB51967.1"/>
    <property type="molecule type" value="Genomic_DNA"/>
</dbReference>
<dbReference type="PIR" id="T35500">
    <property type="entry name" value="T35500"/>
</dbReference>
<dbReference type="RefSeq" id="NP_626376.1">
    <property type="nucleotide sequence ID" value="NC_003888.3"/>
</dbReference>
<dbReference type="RefSeq" id="WP_003976696.1">
    <property type="nucleotide sequence ID" value="NZ_VNID01000001.1"/>
</dbReference>
<dbReference type="SMR" id="O08333"/>
<dbReference type="STRING" id="100226.gene:17759717"/>
<dbReference type="PaxDb" id="100226-SCO2119"/>
<dbReference type="KEGG" id="sco:SCO2119"/>
<dbReference type="PATRIC" id="fig|100226.15.peg.2154"/>
<dbReference type="eggNOG" id="COG0205">
    <property type="taxonomic scope" value="Bacteria"/>
</dbReference>
<dbReference type="HOGENOM" id="CLU_020655_0_0_11"/>
<dbReference type="InParanoid" id="O08333"/>
<dbReference type="OrthoDB" id="9802503at2"/>
<dbReference type="PhylomeDB" id="O08333"/>
<dbReference type="BRENDA" id="2.7.1.11">
    <property type="organism ID" value="5998"/>
</dbReference>
<dbReference type="SABIO-RK" id="O08333"/>
<dbReference type="UniPathway" id="UPA00109">
    <property type="reaction ID" value="UER00182"/>
</dbReference>
<dbReference type="Proteomes" id="UP000001973">
    <property type="component" value="Chromosome"/>
</dbReference>
<dbReference type="GO" id="GO:0005945">
    <property type="term" value="C:6-phosphofructokinase complex"/>
    <property type="evidence" value="ECO:0000318"/>
    <property type="project" value="GO_Central"/>
</dbReference>
<dbReference type="GO" id="GO:0003872">
    <property type="term" value="F:6-phosphofructokinase activity"/>
    <property type="evidence" value="ECO:0000318"/>
    <property type="project" value="GO_Central"/>
</dbReference>
<dbReference type="GO" id="GO:0005524">
    <property type="term" value="F:ATP binding"/>
    <property type="evidence" value="ECO:0007669"/>
    <property type="project" value="InterPro"/>
</dbReference>
<dbReference type="GO" id="GO:0047334">
    <property type="term" value="F:diphosphate-fructose-6-phosphate 1-phosphotransferase activity"/>
    <property type="evidence" value="ECO:0007669"/>
    <property type="project" value="UniProtKB-EC"/>
</dbReference>
<dbReference type="GO" id="GO:0070095">
    <property type="term" value="F:fructose-6-phosphate binding"/>
    <property type="evidence" value="ECO:0000318"/>
    <property type="project" value="GO_Central"/>
</dbReference>
<dbReference type="GO" id="GO:0046872">
    <property type="term" value="F:metal ion binding"/>
    <property type="evidence" value="ECO:0007669"/>
    <property type="project" value="UniProtKB-KW"/>
</dbReference>
<dbReference type="GO" id="GO:0061621">
    <property type="term" value="P:canonical glycolysis"/>
    <property type="evidence" value="ECO:0000318"/>
    <property type="project" value="GO_Central"/>
</dbReference>
<dbReference type="GO" id="GO:0030388">
    <property type="term" value="P:fructose 1,6-bisphosphate metabolic process"/>
    <property type="evidence" value="ECO:0000318"/>
    <property type="project" value="GO_Central"/>
</dbReference>
<dbReference type="GO" id="GO:0006002">
    <property type="term" value="P:fructose 6-phosphate metabolic process"/>
    <property type="evidence" value="ECO:0000318"/>
    <property type="project" value="GO_Central"/>
</dbReference>
<dbReference type="FunFam" id="3.40.50.460:FF:000005">
    <property type="entry name" value="ATP-dependent 6-phosphofructokinase"/>
    <property type="match status" value="1"/>
</dbReference>
<dbReference type="Gene3D" id="3.40.50.450">
    <property type="match status" value="1"/>
</dbReference>
<dbReference type="Gene3D" id="3.40.50.460">
    <property type="entry name" value="Phosphofructokinase domain"/>
    <property type="match status" value="1"/>
</dbReference>
<dbReference type="HAMAP" id="MF_01976">
    <property type="entry name" value="Phosphofructokinase_III"/>
    <property type="match status" value="1"/>
</dbReference>
<dbReference type="InterPro" id="IPR022953">
    <property type="entry name" value="ATP_PFK"/>
</dbReference>
<dbReference type="InterPro" id="IPR012003">
    <property type="entry name" value="ATP_PFK_prok-type"/>
</dbReference>
<dbReference type="InterPro" id="IPR015912">
    <property type="entry name" value="Phosphofructokinase_CS"/>
</dbReference>
<dbReference type="InterPro" id="IPR000023">
    <property type="entry name" value="Phosphofructokinase_dom"/>
</dbReference>
<dbReference type="InterPro" id="IPR012829">
    <property type="entry name" value="Phosphofructokinase_III"/>
</dbReference>
<dbReference type="InterPro" id="IPR035966">
    <property type="entry name" value="PKF_sf"/>
</dbReference>
<dbReference type="NCBIfam" id="TIGR02483">
    <property type="entry name" value="PFK_mixed"/>
    <property type="match status" value="1"/>
</dbReference>
<dbReference type="NCBIfam" id="NF002872">
    <property type="entry name" value="PRK03202.1"/>
    <property type="match status" value="1"/>
</dbReference>
<dbReference type="PANTHER" id="PTHR13697:SF52">
    <property type="entry name" value="ATP-DEPENDENT 6-PHOSPHOFRUCTOKINASE 3"/>
    <property type="match status" value="1"/>
</dbReference>
<dbReference type="PANTHER" id="PTHR13697">
    <property type="entry name" value="PHOSPHOFRUCTOKINASE"/>
    <property type="match status" value="1"/>
</dbReference>
<dbReference type="Pfam" id="PF00365">
    <property type="entry name" value="PFK"/>
    <property type="match status" value="1"/>
</dbReference>
<dbReference type="PIRSF" id="PIRSF000532">
    <property type="entry name" value="ATP_PFK_prok"/>
    <property type="match status" value="1"/>
</dbReference>
<dbReference type="PRINTS" id="PR00476">
    <property type="entry name" value="PHFRCTKINASE"/>
</dbReference>
<dbReference type="SUPFAM" id="SSF53784">
    <property type="entry name" value="Phosphofructokinase"/>
    <property type="match status" value="1"/>
</dbReference>
<dbReference type="PROSITE" id="PS00433">
    <property type="entry name" value="PHOSPHOFRUCTOKINASE"/>
    <property type="match status" value="1"/>
</dbReference>
<gene>
    <name evidence="1" type="primary">pfkA1</name>
    <name type="synonym">pfk1</name>
    <name type="synonym">pfkA</name>
    <name type="synonym">pfp</name>
    <name type="ordered locus">SCO2119</name>
    <name type="ORF">SC6E10.13c</name>
</gene>
<protein>
    <recommendedName>
        <fullName evidence="1">Pyrophosphate--fructose 6-phosphate 1-phosphotransferase</fullName>
        <ecNumber evidence="1">2.7.1.90</ecNumber>
    </recommendedName>
    <alternativeName>
        <fullName evidence="1">6-phosphofructokinase, pyrophosphate dependent</fullName>
    </alternativeName>
    <alternativeName>
        <fullName evidence="1">PPi-dependent phosphofructokinase</fullName>
        <shortName evidence="1">PPi-PFK</shortName>
    </alternativeName>
    <alternativeName>
        <fullName evidence="1">Pyrophosphate-dependent 6-phosphofructose-1-kinase</fullName>
    </alternativeName>
</protein>
<evidence type="ECO:0000255" key="1">
    <source>
        <dbReference type="HAMAP-Rule" id="MF_01976"/>
    </source>
</evidence>
<evidence type="ECO:0000269" key="2">
    <source>
    </source>
</evidence>
<evidence type="ECO:0000305" key="3">
    <source>
    </source>
</evidence>
<evidence type="ECO:0000305" key="4">
    <source>
    </source>
</evidence>
<organism>
    <name type="scientific">Streptomyces coelicolor (strain ATCC BAA-471 / A3(2) / M145)</name>
    <dbReference type="NCBI Taxonomy" id="100226"/>
    <lineage>
        <taxon>Bacteria</taxon>
        <taxon>Bacillati</taxon>
        <taxon>Actinomycetota</taxon>
        <taxon>Actinomycetes</taxon>
        <taxon>Kitasatosporales</taxon>
        <taxon>Streptomycetaceae</taxon>
        <taxon>Streptomyces</taxon>
        <taxon>Streptomyces albidoflavus group</taxon>
    </lineage>
</organism>